<proteinExistence type="inferred from homology"/>
<gene>
    <name type="primary">top2</name>
    <name type="synonym">topB</name>
    <name type="ORF">DDB_G0270418</name>
</gene>
<protein>
    <recommendedName>
        <fullName>Probable DNA topoisomerase 2</fullName>
        <ecNumber evidence="3">5.6.2.2</ecNumber>
    </recommendedName>
    <alternativeName>
        <fullName>DNA topoisomerase II</fullName>
    </alternativeName>
</protein>
<reference key="1">
    <citation type="journal article" date="2005" name="Nature">
        <title>The genome of the social amoeba Dictyostelium discoideum.</title>
        <authorList>
            <person name="Eichinger L."/>
            <person name="Pachebat J.A."/>
            <person name="Gloeckner G."/>
            <person name="Rajandream M.A."/>
            <person name="Sucgang R."/>
            <person name="Berriman M."/>
            <person name="Song J."/>
            <person name="Olsen R."/>
            <person name="Szafranski K."/>
            <person name="Xu Q."/>
            <person name="Tunggal B."/>
            <person name="Kummerfeld S."/>
            <person name="Madera M."/>
            <person name="Konfortov B.A."/>
            <person name="Rivero F."/>
            <person name="Bankier A.T."/>
            <person name="Lehmann R."/>
            <person name="Hamlin N."/>
            <person name="Davies R."/>
            <person name="Gaudet P."/>
            <person name="Fey P."/>
            <person name="Pilcher K."/>
            <person name="Chen G."/>
            <person name="Saunders D."/>
            <person name="Sodergren E.J."/>
            <person name="Davis P."/>
            <person name="Kerhornou A."/>
            <person name="Nie X."/>
            <person name="Hall N."/>
            <person name="Anjard C."/>
            <person name="Hemphill L."/>
            <person name="Bason N."/>
            <person name="Farbrother P."/>
            <person name="Desany B."/>
            <person name="Just E."/>
            <person name="Morio T."/>
            <person name="Rost R."/>
            <person name="Churcher C.M."/>
            <person name="Cooper J."/>
            <person name="Haydock S."/>
            <person name="van Driessche N."/>
            <person name="Cronin A."/>
            <person name="Goodhead I."/>
            <person name="Muzny D.M."/>
            <person name="Mourier T."/>
            <person name="Pain A."/>
            <person name="Lu M."/>
            <person name="Harper D."/>
            <person name="Lindsay R."/>
            <person name="Hauser H."/>
            <person name="James K.D."/>
            <person name="Quiles M."/>
            <person name="Madan Babu M."/>
            <person name="Saito T."/>
            <person name="Buchrieser C."/>
            <person name="Wardroper A."/>
            <person name="Felder M."/>
            <person name="Thangavelu M."/>
            <person name="Johnson D."/>
            <person name="Knights A."/>
            <person name="Loulseged H."/>
            <person name="Mungall K.L."/>
            <person name="Oliver K."/>
            <person name="Price C."/>
            <person name="Quail M.A."/>
            <person name="Urushihara H."/>
            <person name="Hernandez J."/>
            <person name="Rabbinowitsch E."/>
            <person name="Steffen D."/>
            <person name="Sanders M."/>
            <person name="Ma J."/>
            <person name="Kohara Y."/>
            <person name="Sharp S."/>
            <person name="Simmonds M.N."/>
            <person name="Spiegler S."/>
            <person name="Tivey A."/>
            <person name="Sugano S."/>
            <person name="White B."/>
            <person name="Walker D."/>
            <person name="Woodward J.R."/>
            <person name="Winckler T."/>
            <person name="Tanaka Y."/>
            <person name="Shaulsky G."/>
            <person name="Schleicher M."/>
            <person name="Weinstock G.M."/>
            <person name="Rosenthal A."/>
            <person name="Cox E.C."/>
            <person name="Chisholm R.L."/>
            <person name="Gibbs R.A."/>
            <person name="Loomis W.F."/>
            <person name="Platzer M."/>
            <person name="Kay R.R."/>
            <person name="Williams J.G."/>
            <person name="Dear P.H."/>
            <person name="Noegel A.A."/>
            <person name="Barrell B.G."/>
            <person name="Kuspa A."/>
        </authorList>
    </citation>
    <scope>NUCLEOTIDE SEQUENCE [LARGE SCALE GENOMIC DNA]</scope>
    <source>
        <strain>AX4</strain>
    </source>
</reference>
<comment type="function">
    <text evidence="1">Control of topological states of DNA by transient breakage and subsequent rejoining of DNA strands. Topoisomerase II makes double-strand breaks (By similarity).</text>
</comment>
<comment type="catalytic activity">
    <reaction evidence="3">
        <text>ATP-dependent breakage, passage and rejoining of double-stranded DNA.</text>
        <dbReference type="EC" id="5.6.2.2"/>
    </reaction>
</comment>
<comment type="cofactor">
    <cofactor evidence="3">
        <name>Mg(2+)</name>
        <dbReference type="ChEBI" id="CHEBI:18420"/>
    </cofactor>
    <cofactor evidence="3">
        <name>Mn(2+)</name>
        <dbReference type="ChEBI" id="CHEBI:29035"/>
    </cofactor>
    <cofactor evidence="3">
        <name>Ca(2+)</name>
        <dbReference type="ChEBI" id="CHEBI:29108"/>
    </cofactor>
    <text evidence="3">Binds two Mg(2+) per subunit. The magnesium ions form salt bridges with both the protein and the DNA. Can also accept other divalent metal cations, such as Mn(2+) or Ca(2+).</text>
</comment>
<comment type="subunit">
    <text evidence="1">Homodimer.</text>
</comment>
<comment type="subcellular location">
    <subcellularLocation>
        <location evidence="1">Nucleus</location>
    </subcellularLocation>
</comment>
<comment type="similarity">
    <text evidence="6">Belongs to the type II topoisomerase family.</text>
</comment>
<keyword id="KW-0067">ATP-binding</keyword>
<keyword id="KW-0238">DNA-binding</keyword>
<keyword id="KW-0413">Isomerase</keyword>
<keyword id="KW-0460">Magnesium</keyword>
<keyword id="KW-0479">Metal-binding</keyword>
<keyword id="KW-0547">Nucleotide-binding</keyword>
<keyword id="KW-0539">Nucleus</keyword>
<keyword id="KW-1185">Reference proteome</keyword>
<keyword id="KW-0799">Topoisomerase</keyword>
<dbReference type="EC" id="5.6.2.2" evidence="3"/>
<dbReference type="EMBL" id="AAFI02000005">
    <property type="protein sequence ID" value="EAL72559.1"/>
    <property type="molecule type" value="Genomic_DNA"/>
</dbReference>
<dbReference type="RefSeq" id="XP_646786.1">
    <property type="nucleotide sequence ID" value="XM_641694.1"/>
</dbReference>
<dbReference type="SMR" id="Q55BP5"/>
<dbReference type="FunCoup" id="Q55BP5">
    <property type="interactions" value="844"/>
</dbReference>
<dbReference type="STRING" id="44689.Q55BP5"/>
<dbReference type="PaxDb" id="44689-DDB0231510"/>
<dbReference type="EnsemblProtists" id="EAL72559">
    <property type="protein sequence ID" value="EAL72559"/>
    <property type="gene ID" value="DDB_G0270418"/>
</dbReference>
<dbReference type="GeneID" id="8617759"/>
<dbReference type="KEGG" id="ddi:DDB_G0270418"/>
<dbReference type="dictyBase" id="DDB_G0270418">
    <property type="gene designation" value="top2"/>
</dbReference>
<dbReference type="VEuPathDB" id="AmoebaDB:DDB_G0270418"/>
<dbReference type="eggNOG" id="KOG0355">
    <property type="taxonomic scope" value="Eukaryota"/>
</dbReference>
<dbReference type="HOGENOM" id="CLU_001935_1_1_1"/>
<dbReference type="InParanoid" id="Q55BP5"/>
<dbReference type="OMA" id="TWTQDFK"/>
<dbReference type="PhylomeDB" id="Q55BP5"/>
<dbReference type="Reactome" id="R-DDI-4615885">
    <property type="pathway name" value="SUMOylation of DNA replication proteins"/>
</dbReference>
<dbReference type="PRO" id="PR:Q55BP5"/>
<dbReference type="Proteomes" id="UP000002195">
    <property type="component" value="Chromosome 1"/>
</dbReference>
<dbReference type="GO" id="GO:0005694">
    <property type="term" value="C:chromosome"/>
    <property type="evidence" value="ECO:0000250"/>
    <property type="project" value="dictyBase"/>
</dbReference>
<dbReference type="GO" id="GO:0005634">
    <property type="term" value="C:nucleus"/>
    <property type="evidence" value="ECO:0000250"/>
    <property type="project" value="dictyBase"/>
</dbReference>
<dbReference type="GO" id="GO:0005524">
    <property type="term" value="F:ATP binding"/>
    <property type="evidence" value="ECO:0007669"/>
    <property type="project" value="UniProtKB-KW"/>
</dbReference>
<dbReference type="GO" id="GO:0003677">
    <property type="term" value="F:DNA binding"/>
    <property type="evidence" value="ECO:0000250"/>
    <property type="project" value="dictyBase"/>
</dbReference>
<dbReference type="GO" id="GO:0003918">
    <property type="term" value="F:DNA topoisomerase type II (double strand cut, ATP-hydrolyzing) activity"/>
    <property type="evidence" value="ECO:0000250"/>
    <property type="project" value="dictyBase"/>
</dbReference>
<dbReference type="GO" id="GO:0046872">
    <property type="term" value="F:metal ion binding"/>
    <property type="evidence" value="ECO:0007669"/>
    <property type="project" value="UniProtKB-KW"/>
</dbReference>
<dbReference type="GO" id="GO:0006265">
    <property type="term" value="P:DNA topological change"/>
    <property type="evidence" value="ECO:0000250"/>
    <property type="project" value="dictyBase"/>
</dbReference>
<dbReference type="GO" id="GO:0000712">
    <property type="term" value="P:resolution of meiotic recombination intermediates"/>
    <property type="evidence" value="ECO:0000318"/>
    <property type="project" value="GO_Central"/>
</dbReference>
<dbReference type="GO" id="GO:0000819">
    <property type="term" value="P:sister chromatid segregation"/>
    <property type="evidence" value="ECO:0000318"/>
    <property type="project" value="GO_Central"/>
</dbReference>
<dbReference type="CDD" id="cd16930">
    <property type="entry name" value="HATPase_TopII-like"/>
    <property type="match status" value="1"/>
</dbReference>
<dbReference type="CDD" id="cd03481">
    <property type="entry name" value="TopoIIA_Trans_ScTopoIIA"/>
    <property type="match status" value="1"/>
</dbReference>
<dbReference type="CDD" id="cd03365">
    <property type="entry name" value="TOPRIM_TopoIIA"/>
    <property type="match status" value="1"/>
</dbReference>
<dbReference type="FunFam" id="3.30.1490.30:FF:000001">
    <property type="entry name" value="DNA topoisomerase 2"/>
    <property type="match status" value="1"/>
</dbReference>
<dbReference type="FunFam" id="3.30.230.10:FF:000008">
    <property type="entry name" value="DNA topoisomerase 2"/>
    <property type="match status" value="1"/>
</dbReference>
<dbReference type="FunFam" id="3.30.565.10:FF:000004">
    <property type="entry name" value="DNA topoisomerase 2"/>
    <property type="match status" value="1"/>
</dbReference>
<dbReference type="FunFam" id="3.40.50.670:FF:000001">
    <property type="entry name" value="DNA topoisomerase 2"/>
    <property type="match status" value="2"/>
</dbReference>
<dbReference type="FunFam" id="3.90.199.10:FF:000002">
    <property type="entry name" value="DNA topoisomerase 2"/>
    <property type="match status" value="1"/>
</dbReference>
<dbReference type="FunFam" id="3.30.1360.40:FF:000036">
    <property type="entry name" value="Probable DNA topoisomerase 2"/>
    <property type="match status" value="1"/>
</dbReference>
<dbReference type="Gene3D" id="3.30.1360.40">
    <property type="match status" value="1"/>
</dbReference>
<dbReference type="Gene3D" id="3.30.1490.30">
    <property type="match status" value="1"/>
</dbReference>
<dbReference type="Gene3D" id="3.30.230.10">
    <property type="match status" value="1"/>
</dbReference>
<dbReference type="Gene3D" id="3.40.50.670">
    <property type="match status" value="1"/>
</dbReference>
<dbReference type="Gene3D" id="3.30.565.10">
    <property type="entry name" value="Histidine kinase-like ATPase, C-terminal domain"/>
    <property type="match status" value="1"/>
</dbReference>
<dbReference type="Gene3D" id="3.90.199.10">
    <property type="entry name" value="Topoisomerase II, domain 5"/>
    <property type="match status" value="1"/>
</dbReference>
<dbReference type="Gene3D" id="1.10.268.10">
    <property type="entry name" value="Topoisomerase, domain 3"/>
    <property type="match status" value="1"/>
</dbReference>
<dbReference type="InterPro" id="IPR050634">
    <property type="entry name" value="DNA_Topoisomerase_II"/>
</dbReference>
<dbReference type="InterPro" id="IPR036890">
    <property type="entry name" value="HATPase_C_sf"/>
</dbReference>
<dbReference type="InterPro" id="IPR020568">
    <property type="entry name" value="Ribosomal_Su5_D2-typ_SF"/>
</dbReference>
<dbReference type="InterPro" id="IPR014721">
    <property type="entry name" value="Ribsml_uS5_D2-typ_fold_subgr"/>
</dbReference>
<dbReference type="InterPro" id="IPR001241">
    <property type="entry name" value="Topo_IIA"/>
</dbReference>
<dbReference type="InterPro" id="IPR013760">
    <property type="entry name" value="Topo_IIA-like_dom_sf"/>
</dbReference>
<dbReference type="InterPro" id="IPR013758">
    <property type="entry name" value="Topo_IIA_A/C_ab"/>
</dbReference>
<dbReference type="InterPro" id="IPR013757">
    <property type="entry name" value="Topo_IIA_A_a_sf"/>
</dbReference>
<dbReference type="InterPro" id="IPR013759">
    <property type="entry name" value="Topo_IIA_B_C"/>
</dbReference>
<dbReference type="InterPro" id="IPR013506">
    <property type="entry name" value="Topo_IIA_bsu_dom2"/>
</dbReference>
<dbReference type="InterPro" id="IPR002205">
    <property type="entry name" value="Topo_IIA_dom_A"/>
</dbReference>
<dbReference type="InterPro" id="IPR001154">
    <property type="entry name" value="TopoII_euk"/>
</dbReference>
<dbReference type="InterPro" id="IPR018522">
    <property type="entry name" value="TopoIIA_CS"/>
</dbReference>
<dbReference type="InterPro" id="IPR031660">
    <property type="entry name" value="TOPRIM_C"/>
</dbReference>
<dbReference type="InterPro" id="IPR006171">
    <property type="entry name" value="TOPRIM_dom"/>
</dbReference>
<dbReference type="InterPro" id="IPR034157">
    <property type="entry name" value="TOPRIM_TopoII"/>
</dbReference>
<dbReference type="PANTHER" id="PTHR10169:SF38">
    <property type="entry name" value="DNA TOPOISOMERASE 2"/>
    <property type="match status" value="1"/>
</dbReference>
<dbReference type="PANTHER" id="PTHR10169">
    <property type="entry name" value="DNA TOPOISOMERASE/GYRASE"/>
    <property type="match status" value="1"/>
</dbReference>
<dbReference type="Pfam" id="PF00204">
    <property type="entry name" value="DNA_gyraseB"/>
    <property type="match status" value="1"/>
</dbReference>
<dbReference type="Pfam" id="PF00521">
    <property type="entry name" value="DNA_topoisoIV"/>
    <property type="match status" value="1"/>
</dbReference>
<dbReference type="Pfam" id="PF02518">
    <property type="entry name" value="HATPase_c"/>
    <property type="match status" value="1"/>
</dbReference>
<dbReference type="Pfam" id="PF01751">
    <property type="entry name" value="Toprim"/>
    <property type="match status" value="1"/>
</dbReference>
<dbReference type="Pfam" id="PF16898">
    <property type="entry name" value="TOPRIM_C"/>
    <property type="match status" value="1"/>
</dbReference>
<dbReference type="PRINTS" id="PR01158">
    <property type="entry name" value="TOPISMRASEII"/>
</dbReference>
<dbReference type="PRINTS" id="PR00418">
    <property type="entry name" value="TPI2FAMILY"/>
</dbReference>
<dbReference type="SMART" id="SM00433">
    <property type="entry name" value="TOP2c"/>
    <property type="match status" value="1"/>
</dbReference>
<dbReference type="SMART" id="SM00434">
    <property type="entry name" value="TOP4c"/>
    <property type="match status" value="1"/>
</dbReference>
<dbReference type="SUPFAM" id="SSF55874">
    <property type="entry name" value="ATPase domain of HSP90 chaperone/DNA topoisomerase II/histidine kinase"/>
    <property type="match status" value="1"/>
</dbReference>
<dbReference type="SUPFAM" id="SSF54211">
    <property type="entry name" value="Ribosomal protein S5 domain 2-like"/>
    <property type="match status" value="1"/>
</dbReference>
<dbReference type="SUPFAM" id="SSF56719">
    <property type="entry name" value="Type II DNA topoisomerase"/>
    <property type="match status" value="1"/>
</dbReference>
<dbReference type="PROSITE" id="PS52040">
    <property type="entry name" value="TOPO_IIA"/>
    <property type="match status" value="1"/>
</dbReference>
<dbReference type="PROSITE" id="PS00177">
    <property type="entry name" value="TOPOISOMERASE_II"/>
    <property type="match status" value="1"/>
</dbReference>
<dbReference type="PROSITE" id="PS50880">
    <property type="entry name" value="TOPRIM"/>
    <property type="match status" value="1"/>
</dbReference>
<evidence type="ECO:0000250" key="1"/>
<evidence type="ECO:0000250" key="2">
    <source>
        <dbReference type="UniProtKB" id="P11388"/>
    </source>
</evidence>
<evidence type="ECO:0000255" key="3">
    <source>
        <dbReference type="PROSITE-ProRule" id="PRU00995"/>
    </source>
</evidence>
<evidence type="ECO:0000255" key="4">
    <source>
        <dbReference type="PROSITE-ProRule" id="PRU01384"/>
    </source>
</evidence>
<evidence type="ECO:0000256" key="5">
    <source>
        <dbReference type="SAM" id="MobiDB-lite"/>
    </source>
</evidence>
<evidence type="ECO:0000305" key="6"/>
<feature type="chain" id="PRO_0000330609" description="Probable DNA topoisomerase 2">
    <location>
        <begin position="1"/>
        <end position="1521"/>
    </location>
</feature>
<feature type="domain" description="Toprim" evidence="3">
    <location>
        <begin position="527"/>
        <end position="640"/>
    </location>
</feature>
<feature type="domain" description="Topo IIA-type catalytic" evidence="4">
    <location>
        <begin position="771"/>
        <end position="1273"/>
    </location>
</feature>
<feature type="region of interest" description="Disordered" evidence="5">
    <location>
        <begin position="1"/>
        <end position="87"/>
    </location>
</feature>
<feature type="region of interest" description="Interaction with DNA" evidence="2">
    <location>
        <begin position="412"/>
        <end position="414"/>
    </location>
</feature>
<feature type="region of interest" description="Disordered" evidence="5">
    <location>
        <begin position="1007"/>
        <end position="1047"/>
    </location>
</feature>
<feature type="region of interest" description="Interaction with DNA" evidence="2">
    <location>
        <begin position="1085"/>
        <end position="1094"/>
    </location>
</feature>
<feature type="region of interest" description="Disordered" evidence="5">
    <location>
        <begin position="1192"/>
        <end position="1222"/>
    </location>
</feature>
<feature type="region of interest" description="Disordered" evidence="5">
    <location>
        <begin position="1335"/>
        <end position="1521"/>
    </location>
</feature>
<feature type="compositionally biased region" description="Acidic residues" evidence="5">
    <location>
        <begin position="1"/>
        <end position="10"/>
    </location>
</feature>
<feature type="compositionally biased region" description="Basic residues" evidence="5">
    <location>
        <begin position="36"/>
        <end position="48"/>
    </location>
</feature>
<feature type="compositionally biased region" description="Low complexity" evidence="5">
    <location>
        <begin position="49"/>
        <end position="62"/>
    </location>
</feature>
<feature type="compositionally biased region" description="Basic residues" evidence="5">
    <location>
        <begin position="1021"/>
        <end position="1037"/>
    </location>
</feature>
<feature type="compositionally biased region" description="Acidic residues" evidence="5">
    <location>
        <begin position="1201"/>
        <end position="1222"/>
    </location>
</feature>
<feature type="compositionally biased region" description="Low complexity" evidence="5">
    <location>
        <begin position="1354"/>
        <end position="1368"/>
    </location>
</feature>
<feature type="compositionally biased region" description="Acidic residues" evidence="5">
    <location>
        <begin position="1422"/>
        <end position="1438"/>
    </location>
</feature>
<feature type="compositionally biased region" description="Low complexity" evidence="5">
    <location>
        <begin position="1454"/>
        <end position="1467"/>
    </location>
</feature>
<feature type="compositionally biased region" description="Basic and acidic residues" evidence="5">
    <location>
        <begin position="1468"/>
        <end position="1480"/>
    </location>
</feature>
<feature type="compositionally biased region" description="Acidic residues" evidence="5">
    <location>
        <begin position="1503"/>
        <end position="1521"/>
    </location>
</feature>
<feature type="active site" description="O-(5'-phospho-DNA)-tyrosine intermediate" evidence="4">
    <location>
        <position position="861"/>
    </location>
</feature>
<feature type="binding site" evidence="2">
    <location>
        <position position="163"/>
    </location>
    <ligand>
        <name>ATP</name>
        <dbReference type="ChEBI" id="CHEBI:30616"/>
    </ligand>
</feature>
<feature type="binding site" evidence="2">
    <location>
        <position position="192"/>
    </location>
    <ligand>
        <name>ATP</name>
        <dbReference type="ChEBI" id="CHEBI:30616"/>
    </ligand>
</feature>
<feature type="binding site" evidence="2">
    <location>
        <begin position="220"/>
        <end position="222"/>
    </location>
    <ligand>
        <name>ATP</name>
        <dbReference type="ChEBI" id="CHEBI:30616"/>
    </ligand>
</feature>
<feature type="binding site" evidence="2">
    <location>
        <begin position="233"/>
        <end position="240"/>
    </location>
    <ligand>
        <name>ATP</name>
        <dbReference type="ChEBI" id="CHEBI:30616"/>
    </ligand>
</feature>
<feature type="binding site" evidence="2">
    <location>
        <begin position="446"/>
        <end position="448"/>
    </location>
    <ligand>
        <name>ATP</name>
        <dbReference type="ChEBI" id="CHEBI:30616"/>
    </ligand>
</feature>
<feature type="binding site" evidence="3">
    <location>
        <position position="533"/>
    </location>
    <ligand>
        <name>Mg(2+)</name>
        <dbReference type="ChEBI" id="CHEBI:18420"/>
        <label>1</label>
        <note>catalytic</note>
    </ligand>
</feature>
<feature type="binding site" evidence="3">
    <location>
        <position position="609"/>
    </location>
    <ligand>
        <name>Mg(2+)</name>
        <dbReference type="ChEBI" id="CHEBI:18420"/>
        <label>1</label>
        <note>catalytic</note>
    </ligand>
</feature>
<feature type="binding site" evidence="3">
    <location>
        <position position="609"/>
    </location>
    <ligand>
        <name>Mg(2+)</name>
        <dbReference type="ChEBI" id="CHEBI:18420"/>
        <label>2</label>
    </ligand>
</feature>
<feature type="binding site" evidence="3">
    <location>
        <position position="611"/>
    </location>
    <ligand>
        <name>Mg(2+)</name>
        <dbReference type="ChEBI" id="CHEBI:18420"/>
        <label>2</label>
    </ligand>
</feature>
<feature type="site" description="Interaction with DNA" evidence="3">
    <location>
        <position position="561"/>
    </location>
</feature>
<feature type="site" description="Interaction with DNA" evidence="3">
    <location>
        <position position="564"/>
    </location>
</feature>
<feature type="site" description="Interaction with DNA" evidence="3">
    <location>
        <position position="728"/>
    </location>
</feature>
<feature type="site" description="Interaction with DNA" evidence="3">
    <location>
        <position position="729"/>
    </location>
</feature>
<feature type="site" description="Interaction with DNA" evidence="3">
    <location>
        <position position="779"/>
    </location>
</feature>
<feature type="site" description="Interaction with DNA" evidence="3">
    <location>
        <position position="813"/>
    </location>
</feature>
<feature type="site" description="Interaction with DNA" evidence="3">
    <location>
        <position position="819"/>
    </location>
</feature>
<feature type="site" description="Transition state stabilizer" evidence="1">
    <location>
        <position position="860"/>
    </location>
</feature>
<feature type="site" description="Important for DNA bending; intercalates between base pairs of target DNA" evidence="1">
    <location>
        <position position="912"/>
    </location>
</feature>
<feature type="site" description="Interaction with DNA" evidence="2">
    <location>
        <position position="992"/>
    </location>
</feature>
<sequence length="1521" mass="171162">MSDSENDYSDESSGSEYESPVKKGKSAPKKPAAAGSKKKASATRKPAAKKATTTTTSTTKKSTTSKKSESDNDDFSGDDKSSSSDNENVFKNIASSAKKGKSIEEIYQKKELLDQILLRPDTYIGSTERQEEELWVWEDKRMVHRKVSFVPGIYKIFDEILVNAADNKQREGNMKFIKVVIDREKGFISVTNDGAGIPIQVHSEHKIYIPELIFGNLLTSSHYDDSEKRLTGGRNGFGAKLANIFSTKFIVECADSKSKKLYKQTFTNNMRSKEDPKITSYQNKTDYTKITFYPELDRFGMVEFDDDLVALLSKRVYDIAGCNPTLKVSLNDEELGIRSFEKYINLYFPDEENAPKVYYEKVSDRWELAVTLSKESQFNQVSFVNSICTVKGGTHVTHALSNIVTAIQEQVNKKNKGSADIKPAFIKNHLSVFVNCLIENPHFDSQTKETLTSKISSFGSRCEPSEKFIKRVLDSKSGIVASILEFAQFKDQSALKRSTSSGGKKGKVSIPKLDDANLAGGTKSEDCTLILTEGDSAKSLATAGISVVGKDHYGAFPLKGKLLNVRDQSTKVINNDEINNIVTILGLKYGKVYETLSDLRYGHLMIMTDQDHDGSHIKGLIINMVHHFWPTLLRMPGFLVEFITPIVKVFKNNQKPISFYTMPEFLKWRETNDKGWDVKYYKGLGTSTPGEGKEYFSDLERHKIDFEWDEGANDNIELAFSKSRADDRKKWMAEHIEGTFLEQFGVKKLTYSDFINKELVLFSIADCERSIPNIVDGLKTSHRKTLYSCFKRNLKKEIKVAQLIGYVSEHSAYHHGEASLYSTIVGMAQEFVGSNNINLLNPAGSYGTRIAGGKDCSSARYIHTRLNDIARAVYHADDDPILSCVVDDGKKVQPKFYIPVIPMILVNGCVGIGTGWSSTIPNYNPRDLIQNMRLAIDGKPLKPIKPWYRGFLGSIEANQGSKVQGGQYLSKGIWKKLSDNRFEITELPIGFWTQDYRELLDELETPGTRKKKKEEKEKKAASRKGTKAKPTTTKRSKRVDDDDDNEKVTEATVKSYTNYSSESTIHFIIDTIQPVDEINIEKVFKLVSTINETNMVVFDEEGRIQRFATTTALQEHFFPLRIKHYQMRKDFLSERLSEEYSRLSNKARFILAVVNKELVISNVKKVDLINKLKEMKFDRIINKNSNKSARDKIKKKKNAFDEEDAAISSDEEKDGAQEEQDDDTKGYDYLLSLPLWSLTLERVKKLIEERDSKKKEWDILLSTPIQEIYKRDLDALEKALDDQDAYDESLKNQTESLKKRTKTKALPRAKKISAKVVKDTKEAPLTKLVKPTVKIPTTTDSNVSGSKRKKSDDTTSTSTSTTTSSNTKPIESFFAKEDKKPTPAVKKSTLVSLDSDSDFDDDVVVSSKPKAPPKKTSKVIELSDESDQESDQESDQGSDPESPPKRSKAPPKKPTTIATKKATTSKSKVIDDKSSDDEVIKAPTNRPTRSRVPPPKSLSFLDSDSDDDDLYDNEESSSDSD</sequence>
<accession>Q55BP5</accession>
<name>TOP2_DICDI</name>
<organism>
    <name type="scientific">Dictyostelium discoideum</name>
    <name type="common">Social amoeba</name>
    <dbReference type="NCBI Taxonomy" id="44689"/>
    <lineage>
        <taxon>Eukaryota</taxon>
        <taxon>Amoebozoa</taxon>
        <taxon>Evosea</taxon>
        <taxon>Eumycetozoa</taxon>
        <taxon>Dictyostelia</taxon>
        <taxon>Dictyosteliales</taxon>
        <taxon>Dictyosteliaceae</taxon>
        <taxon>Dictyostelium</taxon>
    </lineage>
</organism>